<comment type="function">
    <text evidence="1">Found at the monomer-monomer interface of the photosystem II (PS II) dimer, plays a role in assembly and dimerization of PSII. PSII is a light-driven water plastoquinone oxidoreductase, using light energy to abstract electrons from H(2)O, generating a proton gradient subsequently used for ATP formation.</text>
</comment>
<comment type="subunit">
    <text evidence="1">PSII is composed of 1 copy each of membrane proteins PsbA, PsbB, PsbC, PsbD, PsbE, PsbF, PsbH, PsbI, PsbJ, PsbK, PsbL, PsbM, PsbT, PsbX, PsbY, PsbZ, Psb30/Ycf12, peripheral proteins PsbO, CyanoQ (PsbQ), PsbU, PsbV and a large number of cofactors. It forms dimeric complexes.</text>
</comment>
<comment type="subcellular location">
    <subcellularLocation>
        <location evidence="1">Cellular thylakoid membrane</location>
        <topology evidence="1">Single-pass membrane protein</topology>
    </subcellularLocation>
</comment>
<comment type="similarity">
    <text evidence="1">Belongs to the PsbT family.</text>
</comment>
<protein>
    <recommendedName>
        <fullName evidence="1">Photosystem II reaction center protein T</fullName>
        <shortName evidence="1">PSII-T</shortName>
    </recommendedName>
</protein>
<dbReference type="EMBL" id="CP000117">
    <property type="protein sequence ID" value="ABA21129.1"/>
    <property type="molecule type" value="Genomic_DNA"/>
</dbReference>
<dbReference type="RefSeq" id="WP_010994314.1">
    <property type="nucleotide sequence ID" value="NC_007413.1"/>
</dbReference>
<dbReference type="SMR" id="Q3MD07"/>
<dbReference type="STRING" id="240292.Ava_1506"/>
<dbReference type="KEGG" id="ava:Ava_1506"/>
<dbReference type="eggNOG" id="ENOG5033APQ">
    <property type="taxonomic scope" value="Bacteria"/>
</dbReference>
<dbReference type="HOGENOM" id="CLU_217078_1_0_3"/>
<dbReference type="Proteomes" id="UP000002533">
    <property type="component" value="Chromosome"/>
</dbReference>
<dbReference type="GO" id="GO:0009539">
    <property type="term" value="C:photosystem II reaction center"/>
    <property type="evidence" value="ECO:0007669"/>
    <property type="project" value="InterPro"/>
</dbReference>
<dbReference type="GO" id="GO:0031676">
    <property type="term" value="C:plasma membrane-derived thylakoid membrane"/>
    <property type="evidence" value="ECO:0007669"/>
    <property type="project" value="UniProtKB-SubCell"/>
</dbReference>
<dbReference type="GO" id="GO:0015979">
    <property type="term" value="P:photosynthesis"/>
    <property type="evidence" value="ECO:0007669"/>
    <property type="project" value="UniProtKB-UniRule"/>
</dbReference>
<dbReference type="HAMAP" id="MF_00808">
    <property type="entry name" value="PSII_PsbT"/>
    <property type="match status" value="1"/>
</dbReference>
<dbReference type="InterPro" id="IPR001743">
    <property type="entry name" value="PSII_PsbT"/>
</dbReference>
<dbReference type="InterPro" id="IPR037268">
    <property type="entry name" value="PSII_PsbT_sf"/>
</dbReference>
<dbReference type="NCBIfam" id="NF008825">
    <property type="entry name" value="PRK11875.1"/>
    <property type="match status" value="1"/>
</dbReference>
<dbReference type="PANTHER" id="PTHR36411">
    <property type="match status" value="1"/>
</dbReference>
<dbReference type="PANTHER" id="PTHR36411:SF2">
    <property type="entry name" value="PHOTOSYSTEM II REACTION CENTER PROTEIN T"/>
    <property type="match status" value="1"/>
</dbReference>
<dbReference type="Pfam" id="PF01405">
    <property type="entry name" value="PsbT"/>
    <property type="match status" value="1"/>
</dbReference>
<dbReference type="SUPFAM" id="SSF161029">
    <property type="entry name" value="Photosystem II reaction center protein T, PsbT"/>
    <property type="match status" value="1"/>
</dbReference>
<gene>
    <name evidence="1" type="primary">psbT</name>
    <name type="ordered locus">Ava_1506</name>
</gene>
<reference key="1">
    <citation type="journal article" date="2014" name="Stand. Genomic Sci.">
        <title>Complete genome sequence of Anabaena variabilis ATCC 29413.</title>
        <authorList>
            <person name="Thiel T."/>
            <person name="Pratte B.S."/>
            <person name="Zhong J."/>
            <person name="Goodwin L."/>
            <person name="Copeland A."/>
            <person name="Lucas S."/>
            <person name="Han C."/>
            <person name="Pitluck S."/>
            <person name="Land M.L."/>
            <person name="Kyrpides N.C."/>
            <person name="Woyke T."/>
        </authorList>
    </citation>
    <scope>NUCLEOTIDE SEQUENCE [LARGE SCALE GENOMIC DNA]</scope>
    <source>
        <strain>ATCC 29413 / PCC 7937</strain>
    </source>
</reference>
<keyword id="KW-0472">Membrane</keyword>
<keyword id="KW-0602">Photosynthesis</keyword>
<keyword id="KW-0604">Photosystem II</keyword>
<keyword id="KW-0793">Thylakoid</keyword>
<keyword id="KW-0812">Transmembrane</keyword>
<keyword id="KW-1133">Transmembrane helix</keyword>
<accession>Q3MD07</accession>
<feature type="chain" id="PRO_1000047092" description="Photosystem II reaction center protein T">
    <location>
        <begin position="1"/>
        <end position="35"/>
    </location>
</feature>
<feature type="transmembrane region" description="Helical" evidence="1">
    <location>
        <begin position="3"/>
        <end position="23"/>
    </location>
</feature>
<organism>
    <name type="scientific">Trichormus variabilis (strain ATCC 29413 / PCC 7937)</name>
    <name type="common">Anabaena variabilis</name>
    <dbReference type="NCBI Taxonomy" id="240292"/>
    <lineage>
        <taxon>Bacteria</taxon>
        <taxon>Bacillati</taxon>
        <taxon>Cyanobacteriota</taxon>
        <taxon>Cyanophyceae</taxon>
        <taxon>Nostocales</taxon>
        <taxon>Nostocaceae</taxon>
        <taxon>Trichormus</taxon>
    </lineage>
</organism>
<proteinExistence type="inferred from homology"/>
<evidence type="ECO:0000255" key="1">
    <source>
        <dbReference type="HAMAP-Rule" id="MF_00808"/>
    </source>
</evidence>
<name>PSBT_TRIV2</name>
<sequence>MESVAYILILTLAIGVLFFAIAFREPPRIEKKEEK</sequence>